<evidence type="ECO:0000250" key="1"/>
<evidence type="ECO:0000255" key="2">
    <source>
        <dbReference type="HAMAP-Rule" id="MF_00103"/>
    </source>
</evidence>
<comment type="function">
    <text evidence="2">Involved in base excision repair of DNA damaged by oxidation or by mutagenic agents. Acts as a DNA glycosylase that recognizes and removes damaged bases. Has a preference for oxidized purines, such as 7,8-dihydro-8-oxoguanine (8-oxoG). Has AP (apurinic/apyrimidinic) lyase activity and introduces nicks in the DNA strand. Cleaves the DNA backbone by beta-delta elimination to generate a single-strand break at the site of the removed base with both 3'- and 5'-phosphates.</text>
</comment>
<comment type="catalytic activity">
    <reaction evidence="2">
        <text>Hydrolysis of DNA containing ring-opened 7-methylguanine residues, releasing 2,6-diamino-4-hydroxy-5-(N-methyl)formamidopyrimidine.</text>
        <dbReference type="EC" id="3.2.2.23"/>
    </reaction>
</comment>
<comment type="catalytic activity">
    <reaction evidence="2">
        <text>2'-deoxyribonucleotide-(2'-deoxyribose 5'-phosphate)-2'-deoxyribonucleotide-DNA = a 3'-end 2'-deoxyribonucleotide-(2,3-dehydro-2,3-deoxyribose 5'-phosphate)-DNA + a 5'-end 5'-phospho-2'-deoxyribonucleoside-DNA + H(+)</text>
        <dbReference type="Rhea" id="RHEA:66592"/>
        <dbReference type="Rhea" id="RHEA-COMP:13180"/>
        <dbReference type="Rhea" id="RHEA-COMP:16897"/>
        <dbReference type="Rhea" id="RHEA-COMP:17067"/>
        <dbReference type="ChEBI" id="CHEBI:15378"/>
        <dbReference type="ChEBI" id="CHEBI:136412"/>
        <dbReference type="ChEBI" id="CHEBI:157695"/>
        <dbReference type="ChEBI" id="CHEBI:167181"/>
        <dbReference type="EC" id="4.2.99.18"/>
    </reaction>
</comment>
<comment type="cofactor">
    <cofactor evidence="2">
        <name>Zn(2+)</name>
        <dbReference type="ChEBI" id="CHEBI:29105"/>
    </cofactor>
    <text evidence="2">Binds 1 zinc ion per subunit.</text>
</comment>
<comment type="subunit">
    <text evidence="2">Monomer.</text>
</comment>
<comment type="similarity">
    <text evidence="2">Belongs to the FPG family.</text>
</comment>
<accession>A8G2Y9</accession>
<gene>
    <name evidence="2" type="primary">mutM</name>
    <name evidence="2" type="synonym">fpg</name>
    <name type="ordered locus">P9215_03541</name>
</gene>
<name>FPG_PROM2</name>
<protein>
    <recommendedName>
        <fullName evidence="2">Formamidopyrimidine-DNA glycosylase</fullName>
        <shortName evidence="2">Fapy-DNA glycosylase</shortName>
        <ecNumber evidence="2">3.2.2.23</ecNumber>
    </recommendedName>
    <alternativeName>
        <fullName evidence="2">DNA-(apurinic or apyrimidinic site) lyase MutM</fullName>
        <shortName evidence="2">AP lyase MutM</shortName>
        <ecNumber evidence="2">4.2.99.18</ecNumber>
    </alternativeName>
</protein>
<feature type="initiator methionine" description="Removed" evidence="1">
    <location>
        <position position="1"/>
    </location>
</feature>
<feature type="chain" id="PRO_1000057694" description="Formamidopyrimidine-DNA glycosylase">
    <location>
        <begin position="2"/>
        <end position="293"/>
    </location>
</feature>
<feature type="zinc finger region" description="FPG-type" evidence="2">
    <location>
        <begin position="259"/>
        <end position="293"/>
    </location>
</feature>
<feature type="active site" description="Schiff-base intermediate with DNA" evidence="2">
    <location>
        <position position="2"/>
    </location>
</feature>
<feature type="active site" description="Proton donor" evidence="2">
    <location>
        <position position="3"/>
    </location>
</feature>
<feature type="active site" description="Proton donor; for beta-elimination activity" evidence="2">
    <location>
        <position position="60"/>
    </location>
</feature>
<feature type="active site" description="Proton donor; for delta-elimination activity" evidence="2">
    <location>
        <position position="283"/>
    </location>
</feature>
<feature type="binding site" evidence="2">
    <location>
        <position position="110"/>
    </location>
    <ligand>
        <name>DNA</name>
        <dbReference type="ChEBI" id="CHEBI:16991"/>
    </ligand>
</feature>
<feature type="binding site" evidence="2">
    <location>
        <position position="129"/>
    </location>
    <ligand>
        <name>DNA</name>
        <dbReference type="ChEBI" id="CHEBI:16991"/>
    </ligand>
</feature>
<feature type="binding site" evidence="2">
    <location>
        <position position="174"/>
    </location>
    <ligand>
        <name>DNA</name>
        <dbReference type="ChEBI" id="CHEBI:16991"/>
    </ligand>
</feature>
<keyword id="KW-0227">DNA damage</keyword>
<keyword id="KW-0234">DNA repair</keyword>
<keyword id="KW-0238">DNA-binding</keyword>
<keyword id="KW-0326">Glycosidase</keyword>
<keyword id="KW-0378">Hydrolase</keyword>
<keyword id="KW-0456">Lyase</keyword>
<keyword id="KW-0479">Metal-binding</keyword>
<keyword id="KW-0511">Multifunctional enzyme</keyword>
<keyword id="KW-0862">Zinc</keyword>
<keyword id="KW-0863">Zinc-finger</keyword>
<proteinExistence type="inferred from homology"/>
<organism>
    <name type="scientific">Prochlorococcus marinus (strain MIT 9215)</name>
    <dbReference type="NCBI Taxonomy" id="93060"/>
    <lineage>
        <taxon>Bacteria</taxon>
        <taxon>Bacillati</taxon>
        <taxon>Cyanobacteriota</taxon>
        <taxon>Cyanophyceae</taxon>
        <taxon>Synechococcales</taxon>
        <taxon>Prochlorococcaceae</taxon>
        <taxon>Prochlorococcus</taxon>
    </lineage>
</organism>
<reference key="1">
    <citation type="journal article" date="2007" name="PLoS Genet.">
        <title>Patterns and implications of gene gain and loss in the evolution of Prochlorococcus.</title>
        <authorList>
            <person name="Kettler G.C."/>
            <person name="Martiny A.C."/>
            <person name="Huang K."/>
            <person name="Zucker J."/>
            <person name="Coleman M.L."/>
            <person name="Rodrigue S."/>
            <person name="Chen F."/>
            <person name="Lapidus A."/>
            <person name="Ferriera S."/>
            <person name="Johnson J."/>
            <person name="Steglich C."/>
            <person name="Church G.M."/>
            <person name="Richardson P."/>
            <person name="Chisholm S.W."/>
        </authorList>
    </citation>
    <scope>NUCLEOTIDE SEQUENCE [LARGE SCALE GENOMIC DNA]</scope>
    <source>
        <strain>MIT 9215</strain>
    </source>
</reference>
<sequence>MPELPEVETVRRGLEQKLNNFIIKKVEVCRDSTVAFPNKKEDFIGGLNNSLLYKWNRRGKYLIAELKKLGNENGRFPLEKFSKNNGFLIVHLRMTGYFKFINNSAQPCKHTRIRVFDNKNNELRYIDVRSFGQMWWIKEGLSPNKIIKGLGSLGPEPFSKDFDEIYLKKVISKRTKSIKAILLDQTIVAGIGNIYADESLYSAGISPFREARTIKKNELIKLKESIVTVLKNSIGSGGTTFSDFRDLEGENGNFGLQTNVYRRTGKECRKCGNLIERKKISGRSTHWCPKCQK</sequence>
<dbReference type="EC" id="3.2.2.23" evidence="2"/>
<dbReference type="EC" id="4.2.99.18" evidence="2"/>
<dbReference type="EMBL" id="CP000825">
    <property type="protein sequence ID" value="ABV49970.1"/>
    <property type="molecule type" value="Genomic_DNA"/>
</dbReference>
<dbReference type="RefSeq" id="WP_012007120.1">
    <property type="nucleotide sequence ID" value="NC_009840.1"/>
</dbReference>
<dbReference type="SMR" id="A8G2Y9"/>
<dbReference type="STRING" id="93060.P9215_03541"/>
<dbReference type="KEGG" id="pmh:P9215_03541"/>
<dbReference type="eggNOG" id="COG0266">
    <property type="taxonomic scope" value="Bacteria"/>
</dbReference>
<dbReference type="HOGENOM" id="CLU_038423_1_2_3"/>
<dbReference type="OrthoDB" id="9800855at2"/>
<dbReference type="Proteomes" id="UP000002014">
    <property type="component" value="Chromosome"/>
</dbReference>
<dbReference type="GO" id="GO:0034039">
    <property type="term" value="F:8-oxo-7,8-dihydroguanine DNA N-glycosylase activity"/>
    <property type="evidence" value="ECO:0007669"/>
    <property type="project" value="TreeGrafter"/>
</dbReference>
<dbReference type="GO" id="GO:0140078">
    <property type="term" value="F:class I DNA-(apurinic or apyrimidinic site) endonuclease activity"/>
    <property type="evidence" value="ECO:0007669"/>
    <property type="project" value="UniProtKB-EC"/>
</dbReference>
<dbReference type="GO" id="GO:0003684">
    <property type="term" value="F:damaged DNA binding"/>
    <property type="evidence" value="ECO:0007669"/>
    <property type="project" value="InterPro"/>
</dbReference>
<dbReference type="GO" id="GO:0008270">
    <property type="term" value="F:zinc ion binding"/>
    <property type="evidence" value="ECO:0007669"/>
    <property type="project" value="UniProtKB-UniRule"/>
</dbReference>
<dbReference type="GO" id="GO:0006284">
    <property type="term" value="P:base-excision repair"/>
    <property type="evidence" value="ECO:0007669"/>
    <property type="project" value="InterPro"/>
</dbReference>
<dbReference type="CDD" id="cd08966">
    <property type="entry name" value="EcFpg-like_N"/>
    <property type="match status" value="1"/>
</dbReference>
<dbReference type="FunFam" id="1.10.8.50:FF:000003">
    <property type="entry name" value="Formamidopyrimidine-DNA glycosylase"/>
    <property type="match status" value="1"/>
</dbReference>
<dbReference type="Gene3D" id="1.10.8.50">
    <property type="match status" value="1"/>
</dbReference>
<dbReference type="Gene3D" id="3.20.190.10">
    <property type="entry name" value="MutM-like, N-terminal"/>
    <property type="match status" value="1"/>
</dbReference>
<dbReference type="HAMAP" id="MF_00103">
    <property type="entry name" value="Fapy_DNA_glycosyl"/>
    <property type="match status" value="1"/>
</dbReference>
<dbReference type="InterPro" id="IPR015886">
    <property type="entry name" value="DNA_glyclase/AP_lyase_DNA-bd"/>
</dbReference>
<dbReference type="InterPro" id="IPR015887">
    <property type="entry name" value="DNA_glyclase_Znf_dom_DNA_BS"/>
</dbReference>
<dbReference type="InterPro" id="IPR020629">
    <property type="entry name" value="Formamido-pyr_DNA_Glyclase"/>
</dbReference>
<dbReference type="InterPro" id="IPR012319">
    <property type="entry name" value="FPG_cat"/>
</dbReference>
<dbReference type="InterPro" id="IPR035937">
    <property type="entry name" value="MutM-like_N-ter"/>
</dbReference>
<dbReference type="InterPro" id="IPR010979">
    <property type="entry name" value="Ribosomal_uS13-like_H2TH"/>
</dbReference>
<dbReference type="InterPro" id="IPR000214">
    <property type="entry name" value="Znf_DNA_glyclase/AP_lyase"/>
</dbReference>
<dbReference type="InterPro" id="IPR010663">
    <property type="entry name" value="Znf_FPG/IleRS"/>
</dbReference>
<dbReference type="NCBIfam" id="TIGR00577">
    <property type="entry name" value="fpg"/>
    <property type="match status" value="1"/>
</dbReference>
<dbReference type="NCBIfam" id="NF002211">
    <property type="entry name" value="PRK01103.1"/>
    <property type="match status" value="1"/>
</dbReference>
<dbReference type="NCBIfam" id="NF010551">
    <property type="entry name" value="PRK13945.1"/>
    <property type="match status" value="1"/>
</dbReference>
<dbReference type="PANTHER" id="PTHR22993">
    <property type="entry name" value="FORMAMIDOPYRIMIDINE-DNA GLYCOSYLASE"/>
    <property type="match status" value="1"/>
</dbReference>
<dbReference type="PANTHER" id="PTHR22993:SF9">
    <property type="entry name" value="FORMAMIDOPYRIMIDINE-DNA GLYCOSYLASE"/>
    <property type="match status" value="1"/>
</dbReference>
<dbReference type="Pfam" id="PF01149">
    <property type="entry name" value="Fapy_DNA_glyco"/>
    <property type="match status" value="1"/>
</dbReference>
<dbReference type="Pfam" id="PF06831">
    <property type="entry name" value="H2TH"/>
    <property type="match status" value="1"/>
</dbReference>
<dbReference type="Pfam" id="PF06827">
    <property type="entry name" value="zf-FPG_IleRS"/>
    <property type="match status" value="1"/>
</dbReference>
<dbReference type="SMART" id="SM00898">
    <property type="entry name" value="Fapy_DNA_glyco"/>
    <property type="match status" value="1"/>
</dbReference>
<dbReference type="SMART" id="SM01232">
    <property type="entry name" value="H2TH"/>
    <property type="match status" value="1"/>
</dbReference>
<dbReference type="SUPFAM" id="SSF57716">
    <property type="entry name" value="Glucocorticoid receptor-like (DNA-binding domain)"/>
    <property type="match status" value="1"/>
</dbReference>
<dbReference type="SUPFAM" id="SSF81624">
    <property type="entry name" value="N-terminal domain of MutM-like DNA repair proteins"/>
    <property type="match status" value="1"/>
</dbReference>
<dbReference type="SUPFAM" id="SSF46946">
    <property type="entry name" value="S13-like H2TH domain"/>
    <property type="match status" value="1"/>
</dbReference>
<dbReference type="PROSITE" id="PS51068">
    <property type="entry name" value="FPG_CAT"/>
    <property type="match status" value="1"/>
</dbReference>
<dbReference type="PROSITE" id="PS01242">
    <property type="entry name" value="ZF_FPG_1"/>
    <property type="match status" value="1"/>
</dbReference>
<dbReference type="PROSITE" id="PS51066">
    <property type="entry name" value="ZF_FPG_2"/>
    <property type="match status" value="1"/>
</dbReference>